<protein>
    <recommendedName>
        <fullName>Choline-phosphate cytidylyltransferase</fullName>
        <ecNumber evidence="5">2.7.7.15</ecNumber>
    </recommendedName>
    <alternativeName>
        <fullName>CTP:phosphocholine cytidylyltransferase</fullName>
        <shortName>CCT</shortName>
        <shortName>CT</shortName>
    </alternativeName>
    <alternativeName>
        <fullName>Phosphorylcholine transferase</fullName>
    </alternativeName>
</protein>
<organism>
    <name type="scientific">Saccharomyces cerevisiae (strain ATCC 204508 / S288c)</name>
    <name type="common">Baker's yeast</name>
    <dbReference type="NCBI Taxonomy" id="559292"/>
    <lineage>
        <taxon>Eukaryota</taxon>
        <taxon>Fungi</taxon>
        <taxon>Dikarya</taxon>
        <taxon>Ascomycota</taxon>
        <taxon>Saccharomycotina</taxon>
        <taxon>Saccharomycetes</taxon>
        <taxon>Saccharomycetales</taxon>
        <taxon>Saccharomycetaceae</taxon>
        <taxon>Saccharomyces</taxon>
    </lineage>
</organism>
<accession>P13259</accession>
<accession>D6VUY4</accession>
<name>PCY1_YEAST</name>
<gene>
    <name type="primary">PCT1</name>
    <name type="synonym">CCT</name>
    <name type="synonym">CCT1</name>
    <name type="ordered locus">YGR202C</name>
    <name type="ORF">G7729</name>
</gene>
<proteinExistence type="evidence at protein level"/>
<dbReference type="EC" id="2.7.7.15" evidence="5"/>
<dbReference type="EMBL" id="M36827">
    <property type="protein sequence ID" value="AAA91962.1"/>
    <property type="molecule type" value="Genomic_DNA"/>
</dbReference>
<dbReference type="EMBL" id="Z49133">
    <property type="protein sequence ID" value="CAA88995.1"/>
    <property type="molecule type" value="Genomic_DNA"/>
</dbReference>
<dbReference type="EMBL" id="Z72987">
    <property type="protein sequence ID" value="CAA97229.1"/>
    <property type="molecule type" value="Genomic_DNA"/>
</dbReference>
<dbReference type="EMBL" id="AY557840">
    <property type="protein sequence ID" value="AAS56166.1"/>
    <property type="molecule type" value="Genomic_DNA"/>
</dbReference>
<dbReference type="EMBL" id="BK006941">
    <property type="protein sequence ID" value="DAA08295.1"/>
    <property type="molecule type" value="Genomic_DNA"/>
</dbReference>
<dbReference type="PIR" id="S53925">
    <property type="entry name" value="XNBYCP"/>
</dbReference>
<dbReference type="RefSeq" id="NP_011718.1">
    <property type="nucleotide sequence ID" value="NM_001181331.1"/>
</dbReference>
<dbReference type="SMR" id="P13259"/>
<dbReference type="BioGRID" id="33455">
    <property type="interactions" value="132"/>
</dbReference>
<dbReference type="DIP" id="DIP-6390N"/>
<dbReference type="FunCoup" id="P13259">
    <property type="interactions" value="201"/>
</dbReference>
<dbReference type="IntAct" id="P13259">
    <property type="interactions" value="16"/>
</dbReference>
<dbReference type="MINT" id="P13259"/>
<dbReference type="STRING" id="4932.YGR202C"/>
<dbReference type="SwissLipids" id="SLP:000000069"/>
<dbReference type="iPTMnet" id="P13259"/>
<dbReference type="PaxDb" id="4932-YGR202C"/>
<dbReference type="PeptideAtlas" id="P13259"/>
<dbReference type="EnsemblFungi" id="YGR202C_mRNA">
    <property type="protein sequence ID" value="YGR202C"/>
    <property type="gene ID" value="YGR202C"/>
</dbReference>
<dbReference type="GeneID" id="853116"/>
<dbReference type="KEGG" id="sce:YGR202C"/>
<dbReference type="AGR" id="SGD:S000003434"/>
<dbReference type="SGD" id="S000003434">
    <property type="gene designation" value="PCT1"/>
</dbReference>
<dbReference type="VEuPathDB" id="FungiDB:YGR202C"/>
<dbReference type="eggNOG" id="KOG2804">
    <property type="taxonomic scope" value="Eukaryota"/>
</dbReference>
<dbReference type="GeneTree" id="ENSGT00940000171345"/>
<dbReference type="HOGENOM" id="CLU_034585_0_0_1"/>
<dbReference type="InParanoid" id="P13259"/>
<dbReference type="OMA" id="FAHIYTG"/>
<dbReference type="OrthoDB" id="17102at2759"/>
<dbReference type="BioCyc" id="MetaCyc:YGR202C-MONOMER"/>
<dbReference type="BioCyc" id="YEAST:YGR202C-MONOMER"/>
<dbReference type="Reactome" id="R-SCE-1483191">
    <property type="pathway name" value="Synthesis of PC"/>
</dbReference>
<dbReference type="UniPathway" id="UPA00753">
    <property type="reaction ID" value="UER00739"/>
</dbReference>
<dbReference type="BioGRID-ORCS" id="853116">
    <property type="hits" value="2 hits in 10 CRISPR screens"/>
</dbReference>
<dbReference type="PRO" id="PR:P13259"/>
<dbReference type="Proteomes" id="UP000002311">
    <property type="component" value="Chromosome VII"/>
</dbReference>
<dbReference type="RNAct" id="P13259">
    <property type="molecule type" value="protein"/>
</dbReference>
<dbReference type="GO" id="GO:0016020">
    <property type="term" value="C:membrane"/>
    <property type="evidence" value="ECO:0007669"/>
    <property type="project" value="UniProtKB-SubCell"/>
</dbReference>
<dbReference type="GO" id="GO:0042564">
    <property type="term" value="C:NLS-dependent protein nuclear import complex"/>
    <property type="evidence" value="ECO:0000314"/>
    <property type="project" value="SGD"/>
</dbReference>
<dbReference type="GO" id="GO:0005635">
    <property type="term" value="C:nuclear envelope"/>
    <property type="evidence" value="ECO:0000314"/>
    <property type="project" value="SGD"/>
</dbReference>
<dbReference type="GO" id="GO:0005634">
    <property type="term" value="C:nucleus"/>
    <property type="evidence" value="ECO:0000314"/>
    <property type="project" value="SGD"/>
</dbReference>
<dbReference type="GO" id="GO:0004105">
    <property type="term" value="F:choline-phosphate cytidylyltransferase activity"/>
    <property type="evidence" value="ECO:0000314"/>
    <property type="project" value="SGD"/>
</dbReference>
<dbReference type="GO" id="GO:0031210">
    <property type="term" value="F:phosphatidylcholine binding"/>
    <property type="evidence" value="ECO:0000318"/>
    <property type="project" value="GO_Central"/>
</dbReference>
<dbReference type="GO" id="GO:0006657">
    <property type="term" value="P:CDP-choline pathway"/>
    <property type="evidence" value="ECO:0000314"/>
    <property type="project" value="SGD"/>
</dbReference>
<dbReference type="GO" id="GO:0006656">
    <property type="term" value="P:phosphatidylcholine biosynthetic process"/>
    <property type="evidence" value="ECO:0000314"/>
    <property type="project" value="SGD"/>
</dbReference>
<dbReference type="CDD" id="cd02174">
    <property type="entry name" value="CCT"/>
    <property type="match status" value="1"/>
</dbReference>
<dbReference type="FunFam" id="3.40.50.620:FF:000147">
    <property type="entry name" value="Cholinephosphate cytidylyltransferase"/>
    <property type="match status" value="1"/>
</dbReference>
<dbReference type="Gene3D" id="3.40.50.620">
    <property type="entry name" value="HUPs"/>
    <property type="match status" value="1"/>
</dbReference>
<dbReference type="InterPro" id="IPR041723">
    <property type="entry name" value="CCT"/>
</dbReference>
<dbReference type="InterPro" id="IPR004821">
    <property type="entry name" value="Cyt_trans-like"/>
</dbReference>
<dbReference type="InterPro" id="IPR045049">
    <property type="entry name" value="Pcy1-like"/>
</dbReference>
<dbReference type="InterPro" id="IPR014729">
    <property type="entry name" value="Rossmann-like_a/b/a_fold"/>
</dbReference>
<dbReference type="NCBIfam" id="TIGR00125">
    <property type="entry name" value="cyt_tran_rel"/>
    <property type="match status" value="1"/>
</dbReference>
<dbReference type="PANTHER" id="PTHR10739:SF13">
    <property type="entry name" value="CHOLINE-PHOSPHATE CYTIDYLYLTRANSFERASE"/>
    <property type="match status" value="1"/>
</dbReference>
<dbReference type="PANTHER" id="PTHR10739">
    <property type="entry name" value="CYTIDYLYLTRANSFERASE"/>
    <property type="match status" value="1"/>
</dbReference>
<dbReference type="Pfam" id="PF01467">
    <property type="entry name" value="CTP_transf_like"/>
    <property type="match status" value="1"/>
</dbReference>
<dbReference type="SUPFAM" id="SSF52374">
    <property type="entry name" value="Nucleotidylyl transferase"/>
    <property type="match status" value="1"/>
</dbReference>
<keyword id="KW-0444">Lipid biosynthesis</keyword>
<keyword id="KW-0443">Lipid metabolism</keyword>
<keyword id="KW-0472">Membrane</keyword>
<keyword id="KW-0548">Nucleotidyltransferase</keyword>
<keyword id="KW-0594">Phospholipid biosynthesis</keyword>
<keyword id="KW-1208">Phospholipid metabolism</keyword>
<keyword id="KW-0597">Phosphoprotein</keyword>
<keyword id="KW-1185">Reference proteome</keyword>
<keyword id="KW-0808">Transferase</keyword>
<comment type="function">
    <text evidence="5">Catalyzes the key rate-limiting step in the CDP-choline pathway for phosphatidylcholine biosynthesis.</text>
</comment>
<comment type="catalytic activity">
    <reaction evidence="5">
        <text>phosphocholine + CTP + H(+) = CDP-choline + diphosphate</text>
        <dbReference type="Rhea" id="RHEA:18997"/>
        <dbReference type="ChEBI" id="CHEBI:15378"/>
        <dbReference type="ChEBI" id="CHEBI:33019"/>
        <dbReference type="ChEBI" id="CHEBI:37563"/>
        <dbReference type="ChEBI" id="CHEBI:58779"/>
        <dbReference type="ChEBI" id="CHEBI:295975"/>
        <dbReference type="EC" id="2.7.7.15"/>
    </reaction>
    <physiologicalReaction direction="left-to-right" evidence="5">
        <dbReference type="Rhea" id="RHEA:18998"/>
    </physiologicalReaction>
</comment>
<comment type="pathway">
    <text evidence="7">Phospholipid metabolism; phosphatidylcholine biosynthesis; phosphatidylcholine from phosphocholine: step 1/2.</text>
</comment>
<comment type="subcellular location">
    <subcellularLocation>
        <location>Membrane</location>
    </subcellularLocation>
    <text>Most of its activity is membrane-associated.</text>
</comment>
<comment type="miscellaneous">
    <text evidence="4">Present with 3050 molecules/cell in log phase SD medium.</text>
</comment>
<comment type="similarity">
    <text evidence="6">Belongs to the cytidylyltransferase family.</text>
</comment>
<sequence>MANPTTGKSSIRAKLSNSSLSNLFKKNKNKRQREETEEQDNEDKDESKNQDENKDTQLTPRKRRRLTKEFEEKEARYTNELPKELRKYRPKGFRFNLPPTDRPIRIYADGVFDLFHLGHMKQLEQCKKAFPNVTLIVGVPSDKITHKLKGLTVLTDKQRCETLTHCRWVDEVVPNAPWCVTPEFLLEHKIDYVAHDDIPYVSADSDDIYKPIKEMGKFLTTQRTNGVSTSDIITKIIRDYDKYLMRNFARGATRQELNVSWLKKNELEFKKHINEFRSYFKKNQTNLNNASRDLYFEVREILLKKTLGKKLYSKLIGNELKKQNQRQRKQNFLDDPFTRKLIREASPATEFANEFTGENSTAKSPDDNGNLFSQEDDEDTNSNNTNTNSDSDSNTNSTPPSEDDDDNDRLTLENLTQKKKQSAN</sequence>
<feature type="chain" id="PRO_0000208460" description="Choline-phosphate cytidylyltransferase">
    <location>
        <begin position="1"/>
        <end position="424"/>
    </location>
</feature>
<feature type="region of interest" description="Disordered" evidence="3">
    <location>
        <begin position="1"/>
        <end position="70"/>
    </location>
</feature>
<feature type="region of interest" description="Disordered" evidence="3">
    <location>
        <begin position="348"/>
        <end position="424"/>
    </location>
</feature>
<feature type="compositionally biased region" description="Low complexity" evidence="3">
    <location>
        <begin position="14"/>
        <end position="24"/>
    </location>
</feature>
<feature type="compositionally biased region" description="Acidic residues" evidence="3">
    <location>
        <begin position="35"/>
        <end position="44"/>
    </location>
</feature>
<feature type="compositionally biased region" description="Basic and acidic residues" evidence="3">
    <location>
        <begin position="45"/>
        <end position="55"/>
    </location>
</feature>
<feature type="compositionally biased region" description="Low complexity" evidence="3">
    <location>
        <begin position="381"/>
        <end position="398"/>
    </location>
</feature>
<feature type="binding site" evidence="1">
    <location>
        <begin position="111"/>
        <end position="119"/>
    </location>
    <ligand>
        <name>CTP</name>
        <dbReference type="ChEBI" id="CHEBI:37563"/>
    </ligand>
</feature>
<feature type="binding site" evidence="1">
    <location>
        <position position="149"/>
    </location>
    <ligand>
        <name>CTP</name>
        <dbReference type="ChEBI" id="CHEBI:37563"/>
    </ligand>
</feature>
<feature type="binding site" evidence="1">
    <location>
        <position position="149"/>
    </location>
    <ligand>
        <name>substrate</name>
    </ligand>
</feature>
<feature type="binding site" evidence="1">
    <location>
        <position position="178"/>
    </location>
    <ligand>
        <name>substrate</name>
    </ligand>
</feature>
<feature type="binding site" evidence="1">
    <location>
        <begin position="195"/>
        <end position="196"/>
    </location>
    <ligand>
        <name>CTP</name>
        <dbReference type="ChEBI" id="CHEBI:37563"/>
    </ligand>
</feature>
<feature type="binding site" evidence="1">
    <location>
        <position position="200"/>
    </location>
    <ligand>
        <name>CTP</name>
        <dbReference type="ChEBI" id="CHEBI:37563"/>
    </ligand>
</feature>
<feature type="binding site" evidence="1">
    <location>
        <begin position="223"/>
        <end position="227"/>
    </location>
    <ligand>
        <name>CTP</name>
        <dbReference type="ChEBI" id="CHEBI:37563"/>
    </ligand>
</feature>
<feature type="modified residue" description="Phosphoserine" evidence="9 10 11">
    <location>
        <position position="16"/>
    </location>
</feature>
<feature type="modified residue" description="Phosphothreonine" evidence="10">
    <location>
        <position position="59"/>
    </location>
</feature>
<feature type="modified residue" description="Phosphoserine" evidence="8 10 11">
    <location>
        <position position="346"/>
    </location>
</feature>
<feature type="modified residue" description="Phosphoserine; by CK2" evidence="2">
    <location>
        <position position="401"/>
    </location>
</feature>
<feature type="sequence conflict" description="In Ref. 1; AAA91962." evidence="6" ref="1">
    <original>P</original>
    <variation>PG</variation>
    <location>
        <position position="90"/>
    </location>
</feature>
<feature type="sequence conflict" description="In Ref. 1; AAA91962." evidence="6" ref="1">
    <location>
        <position position="105"/>
    </location>
</feature>
<feature type="sequence conflict" description="In Ref. 1; AAA91962." evidence="6" ref="1">
    <original>Y</original>
    <variation>H</variation>
    <location>
        <position position="192"/>
    </location>
</feature>
<reference key="1">
    <citation type="journal article" date="1987" name="Eur. J. Biochem.">
        <title>Molecular cloning and characterization of the gene encoding cholinephosphate cytidylyltransferase in Saccharomyces cerevisiae.</title>
        <authorList>
            <person name="Tsukagoshi Y."/>
            <person name="Nikawa J."/>
            <person name="Yamashita S."/>
        </authorList>
    </citation>
    <scope>NUCLEOTIDE SEQUENCE [GENOMIC DNA]</scope>
    <scope>FUNCTION</scope>
    <scope>CATALYTIC ACTIVITY</scope>
    <scope>PATHWAY</scope>
</reference>
<reference key="2">
    <citation type="journal article" date="1996" name="Yeast">
        <title>Sequencing of a 17.6 kb segment on the right arm of yeast chromosome VII reveals 12 ORFs, including CCT, ADE3 and TR-I genes, homologues of the yeast PMT and EF1G genes, of the human and bacterial electron-transferring flavoproteins (beta-chain) and of the Escherichia coli phosphoserine phosphohydrolase, and five new ORFs.</title>
        <authorList>
            <person name="Guerreiro P."/>
            <person name="Barreiros T."/>
            <person name="Soares H."/>
            <person name="Cyrne L."/>
            <person name="Maia e Silva A."/>
            <person name="Rodrigues-Pousada C."/>
        </authorList>
    </citation>
    <scope>NUCLEOTIDE SEQUENCE [GENOMIC DNA]</scope>
    <source>
        <strain>ATCC 204508 / S288c</strain>
    </source>
</reference>
<reference key="3">
    <citation type="journal article" date="1997" name="Nature">
        <title>The nucleotide sequence of Saccharomyces cerevisiae chromosome VII.</title>
        <authorList>
            <person name="Tettelin H."/>
            <person name="Agostoni-Carbone M.L."/>
            <person name="Albermann K."/>
            <person name="Albers M."/>
            <person name="Arroyo J."/>
            <person name="Backes U."/>
            <person name="Barreiros T."/>
            <person name="Bertani I."/>
            <person name="Bjourson A.J."/>
            <person name="Brueckner M."/>
            <person name="Bruschi C.V."/>
            <person name="Carignani G."/>
            <person name="Castagnoli L."/>
            <person name="Cerdan E."/>
            <person name="Clemente M.L."/>
            <person name="Coblenz A."/>
            <person name="Coglievina M."/>
            <person name="Coissac E."/>
            <person name="Defoor E."/>
            <person name="Del Bino S."/>
            <person name="Delius H."/>
            <person name="Delneri D."/>
            <person name="de Wergifosse P."/>
            <person name="Dujon B."/>
            <person name="Durand P."/>
            <person name="Entian K.-D."/>
            <person name="Eraso P."/>
            <person name="Escribano V."/>
            <person name="Fabiani L."/>
            <person name="Fartmann B."/>
            <person name="Feroli F."/>
            <person name="Feuermann M."/>
            <person name="Frontali L."/>
            <person name="Garcia-Gonzalez M."/>
            <person name="Garcia-Saez M.I."/>
            <person name="Goffeau A."/>
            <person name="Guerreiro P."/>
            <person name="Hani J."/>
            <person name="Hansen M."/>
            <person name="Hebling U."/>
            <person name="Hernandez K."/>
            <person name="Heumann K."/>
            <person name="Hilger F."/>
            <person name="Hofmann B."/>
            <person name="Indge K.J."/>
            <person name="James C.M."/>
            <person name="Klima R."/>
            <person name="Koetter P."/>
            <person name="Kramer B."/>
            <person name="Kramer W."/>
            <person name="Lauquin G."/>
            <person name="Leuther H."/>
            <person name="Louis E.J."/>
            <person name="Maillier E."/>
            <person name="Marconi A."/>
            <person name="Martegani E."/>
            <person name="Mazon M.J."/>
            <person name="Mazzoni C."/>
            <person name="McReynolds A.D.K."/>
            <person name="Melchioretto P."/>
            <person name="Mewes H.-W."/>
            <person name="Minenkova O."/>
            <person name="Mueller-Auer S."/>
            <person name="Nawrocki A."/>
            <person name="Netter P."/>
            <person name="Neu R."/>
            <person name="Nombela C."/>
            <person name="Oliver S.G."/>
            <person name="Panzeri L."/>
            <person name="Paoluzi S."/>
            <person name="Plevani P."/>
            <person name="Portetelle D."/>
            <person name="Portillo F."/>
            <person name="Potier S."/>
            <person name="Purnelle B."/>
            <person name="Rieger M."/>
            <person name="Riles L."/>
            <person name="Rinaldi T."/>
            <person name="Robben J."/>
            <person name="Rodrigues-Pousada C."/>
            <person name="Rodriguez-Belmonte E."/>
            <person name="Rodriguez-Torres A.M."/>
            <person name="Rose M."/>
            <person name="Ruzzi M."/>
            <person name="Saliola M."/>
            <person name="Sanchez-Perez M."/>
            <person name="Schaefer B."/>
            <person name="Schaefer M."/>
            <person name="Scharfe M."/>
            <person name="Schmidheini T."/>
            <person name="Schreer A."/>
            <person name="Skala J."/>
            <person name="Souciet J.-L."/>
            <person name="Steensma H.Y."/>
            <person name="Talla E."/>
            <person name="Thierry A."/>
            <person name="Vandenbol M."/>
            <person name="van der Aart Q.J.M."/>
            <person name="Van Dyck L."/>
            <person name="Vanoni M."/>
            <person name="Verhasselt P."/>
            <person name="Voet M."/>
            <person name="Volckaert G."/>
            <person name="Wambutt R."/>
            <person name="Watson M.D."/>
            <person name="Weber N."/>
            <person name="Wedler E."/>
            <person name="Wedler H."/>
            <person name="Wipfli P."/>
            <person name="Wolf K."/>
            <person name="Wright L.F."/>
            <person name="Zaccaria P."/>
            <person name="Zimmermann M."/>
            <person name="Zollner A."/>
            <person name="Kleine K."/>
        </authorList>
    </citation>
    <scope>NUCLEOTIDE SEQUENCE [LARGE SCALE GENOMIC DNA]</scope>
    <source>
        <strain>ATCC 204508 / S288c</strain>
    </source>
</reference>
<reference key="4">
    <citation type="journal article" date="2014" name="G3 (Bethesda)">
        <title>The reference genome sequence of Saccharomyces cerevisiae: Then and now.</title>
        <authorList>
            <person name="Engel S.R."/>
            <person name="Dietrich F.S."/>
            <person name="Fisk D.G."/>
            <person name="Binkley G."/>
            <person name="Balakrishnan R."/>
            <person name="Costanzo M.C."/>
            <person name="Dwight S.S."/>
            <person name="Hitz B.C."/>
            <person name="Karra K."/>
            <person name="Nash R.S."/>
            <person name="Weng S."/>
            <person name="Wong E.D."/>
            <person name="Lloyd P."/>
            <person name="Skrzypek M.S."/>
            <person name="Miyasato S.R."/>
            <person name="Simison M."/>
            <person name="Cherry J.M."/>
        </authorList>
    </citation>
    <scope>GENOME REANNOTATION</scope>
    <source>
        <strain>ATCC 204508 / S288c</strain>
    </source>
</reference>
<reference key="5">
    <citation type="journal article" date="2007" name="Genome Res.">
        <title>Approaching a complete repository of sequence-verified protein-encoding clones for Saccharomyces cerevisiae.</title>
        <authorList>
            <person name="Hu Y."/>
            <person name="Rolfs A."/>
            <person name="Bhullar B."/>
            <person name="Murthy T.V.S."/>
            <person name="Zhu C."/>
            <person name="Berger M.F."/>
            <person name="Camargo A.A."/>
            <person name="Kelley F."/>
            <person name="McCarron S."/>
            <person name="Jepson D."/>
            <person name="Richardson A."/>
            <person name="Raphael J."/>
            <person name="Moreira D."/>
            <person name="Taycher E."/>
            <person name="Zuo D."/>
            <person name="Mohr S."/>
            <person name="Kane M.F."/>
            <person name="Williamson J."/>
            <person name="Simpson A.J.G."/>
            <person name="Bulyk M.L."/>
            <person name="Harlow E."/>
            <person name="Marsischky G."/>
            <person name="Kolodner R.D."/>
            <person name="LaBaer J."/>
        </authorList>
    </citation>
    <scope>NUCLEOTIDE SEQUENCE [GENOMIC DNA]</scope>
    <source>
        <strain>ATCC 204508 / S288c</strain>
    </source>
</reference>
<reference key="6">
    <citation type="journal article" date="2003" name="Nature">
        <title>Global analysis of protein expression in yeast.</title>
        <authorList>
            <person name="Ghaemmaghami S."/>
            <person name="Huh W.-K."/>
            <person name="Bower K."/>
            <person name="Howson R.W."/>
            <person name="Belle A."/>
            <person name="Dephoure N."/>
            <person name="O'Shea E.K."/>
            <person name="Weissman J.S."/>
        </authorList>
    </citation>
    <scope>LEVEL OF PROTEIN EXPRESSION [LARGE SCALE ANALYSIS]</scope>
</reference>
<reference key="7">
    <citation type="journal article" date="2005" name="Mol. Cell. Proteomics">
        <title>Quantitative phosphoproteomics applied to the yeast pheromone signaling pathway.</title>
        <authorList>
            <person name="Gruhler A."/>
            <person name="Olsen J.V."/>
            <person name="Mohammed S."/>
            <person name="Mortensen P."/>
            <person name="Faergeman N.J."/>
            <person name="Mann M."/>
            <person name="Jensen O.N."/>
        </authorList>
    </citation>
    <scope>PHOSPHORYLATION [LARGE SCALE ANALYSIS] AT SER-346</scope>
    <scope>IDENTIFICATION BY MASS SPECTROMETRY [LARGE SCALE ANALYSIS]</scope>
    <source>
        <strain>YAL6B</strain>
    </source>
</reference>
<reference key="8">
    <citation type="journal article" date="2007" name="J. Proteome Res.">
        <title>Large-scale phosphorylation analysis of alpha-factor-arrested Saccharomyces cerevisiae.</title>
        <authorList>
            <person name="Li X."/>
            <person name="Gerber S.A."/>
            <person name="Rudner A.D."/>
            <person name="Beausoleil S.A."/>
            <person name="Haas W."/>
            <person name="Villen J."/>
            <person name="Elias J.E."/>
            <person name="Gygi S.P."/>
        </authorList>
    </citation>
    <scope>IDENTIFICATION BY MASS SPECTROMETRY [LARGE SCALE ANALYSIS]</scope>
    <source>
        <strain>ADR376</strain>
    </source>
</reference>
<reference key="9">
    <citation type="journal article" date="2007" name="Proc. Natl. Acad. Sci. U.S.A.">
        <title>Analysis of phosphorylation sites on proteins from Saccharomyces cerevisiae by electron transfer dissociation (ETD) mass spectrometry.</title>
        <authorList>
            <person name="Chi A."/>
            <person name="Huttenhower C."/>
            <person name="Geer L.Y."/>
            <person name="Coon J.J."/>
            <person name="Syka J.E.P."/>
            <person name="Bai D.L."/>
            <person name="Shabanowitz J."/>
            <person name="Burke D.J."/>
            <person name="Troyanskaya O.G."/>
            <person name="Hunt D.F."/>
        </authorList>
    </citation>
    <scope>PHOSPHORYLATION [LARGE SCALE ANALYSIS] AT SER-16</scope>
    <scope>IDENTIFICATION BY MASS SPECTROMETRY [LARGE SCALE ANALYSIS]</scope>
</reference>
<reference key="10">
    <citation type="journal article" date="2008" name="Mol. Cell. Proteomics">
        <title>A multidimensional chromatography technology for in-depth phosphoproteome analysis.</title>
        <authorList>
            <person name="Albuquerque C.P."/>
            <person name="Smolka M.B."/>
            <person name="Payne S.H."/>
            <person name="Bafna V."/>
            <person name="Eng J."/>
            <person name="Zhou H."/>
        </authorList>
    </citation>
    <scope>PHOSPHORYLATION [LARGE SCALE ANALYSIS] AT SER-16; THR-59 AND SER-346</scope>
    <scope>IDENTIFICATION BY MASS SPECTROMETRY [LARGE SCALE ANALYSIS]</scope>
</reference>
<reference key="11">
    <citation type="journal article" date="2009" name="Science">
        <title>Global analysis of Cdk1 substrate phosphorylation sites provides insights into evolution.</title>
        <authorList>
            <person name="Holt L.J."/>
            <person name="Tuch B.B."/>
            <person name="Villen J."/>
            <person name="Johnson A.D."/>
            <person name="Gygi S.P."/>
            <person name="Morgan D.O."/>
        </authorList>
    </citation>
    <scope>PHOSPHORYLATION [LARGE SCALE ANALYSIS] AT SER-16 AND SER-346</scope>
    <scope>IDENTIFICATION BY MASS SPECTROMETRY [LARGE SCALE ANALYSIS]</scope>
</reference>
<reference key="12">
    <citation type="journal article" date="2012" name="Proc. Natl. Acad. Sci. U.S.A.">
        <title>N-terminal acetylome analyses and functional insights of the N-terminal acetyltransferase NatB.</title>
        <authorList>
            <person name="Van Damme P."/>
            <person name="Lasa M."/>
            <person name="Polevoda B."/>
            <person name="Gazquez C."/>
            <person name="Elosegui-Artola A."/>
            <person name="Kim D.S."/>
            <person name="De Juan-Pardo E."/>
            <person name="Demeyer K."/>
            <person name="Hole K."/>
            <person name="Larrea E."/>
            <person name="Timmerman E."/>
            <person name="Prieto J."/>
            <person name="Arnesen T."/>
            <person name="Sherman F."/>
            <person name="Gevaert K."/>
            <person name="Aldabe R."/>
        </authorList>
    </citation>
    <scope>IDENTIFICATION BY MASS SPECTROMETRY [LARGE SCALE ANALYSIS]</scope>
</reference>
<evidence type="ECO:0000250" key="1"/>
<evidence type="ECO:0000255" key="2"/>
<evidence type="ECO:0000256" key="3">
    <source>
        <dbReference type="SAM" id="MobiDB-lite"/>
    </source>
</evidence>
<evidence type="ECO:0000269" key="4">
    <source>
    </source>
</evidence>
<evidence type="ECO:0000269" key="5">
    <source>
    </source>
</evidence>
<evidence type="ECO:0000305" key="6"/>
<evidence type="ECO:0000305" key="7">
    <source>
    </source>
</evidence>
<evidence type="ECO:0007744" key="8">
    <source>
    </source>
</evidence>
<evidence type="ECO:0007744" key="9">
    <source>
    </source>
</evidence>
<evidence type="ECO:0007744" key="10">
    <source>
    </source>
</evidence>
<evidence type="ECO:0007744" key="11">
    <source>
    </source>
</evidence>